<keyword id="KW-0002">3D-structure</keyword>
<keyword id="KW-0963">Cytoplasm</keyword>
<keyword id="KW-1185">Reference proteome</keyword>
<keyword id="KW-0687">Ribonucleoprotein</keyword>
<keyword id="KW-0689">Ribosomal protein</keyword>
<sequence length="130" mass="14783">MTRTSVLADALNAINNAEKTGKRQVLIRPSSKVIIKFLTVMQKHGYIGEFEYIDDHRSGKIVVQLNGRLNKCGVIQPRFNVKINDIERWTDNLLPARQFGYVILTTSAGIMDHEEARRKHVSGKILGFVY</sequence>
<protein>
    <recommendedName>
        <fullName evidence="1">Small ribosomal subunit protein uS8B</fullName>
    </recommendedName>
    <alternativeName>
        <fullName>40S ribosomal protein S22-B</fullName>
    </alternativeName>
</protein>
<accession>P0CU35</accession>
<accession>A0A1D8PD22</accession>
<dbReference type="EMBL" id="CP017623">
    <property type="protein sequence ID" value="AOW26040.1"/>
    <property type="molecule type" value="Genomic_DNA"/>
</dbReference>
<dbReference type="RefSeq" id="XP_019330631.1">
    <property type="nucleotide sequence ID" value="XM_019475086.1"/>
</dbReference>
<dbReference type="PDB" id="7Q0P">
    <property type="method" value="EM"/>
    <property type="resolution" value="2.77 A"/>
    <property type="chains" value="X=1-130"/>
</dbReference>
<dbReference type="PDBsum" id="7Q0P"/>
<dbReference type="EMDB" id="EMD-13749"/>
<dbReference type="SMR" id="P0CU35"/>
<dbReference type="FunCoup" id="P0CU35">
    <property type="interactions" value="1188"/>
</dbReference>
<dbReference type="STRING" id="237561.P0CU35"/>
<dbReference type="EnsemblFungi" id="C1_03620C_A-T">
    <property type="protein sequence ID" value="C1_03620C_A-T-p1"/>
    <property type="gene ID" value="C1_03620C_A"/>
</dbReference>
<dbReference type="EnsemblFungi" id="C1_06460C_A-T">
    <property type="protein sequence ID" value="C1_06460C_A-T-p1"/>
    <property type="gene ID" value="C1_06460C_A"/>
</dbReference>
<dbReference type="GeneID" id="30514981"/>
<dbReference type="KEGG" id="cal:CAALFM_C103620CA"/>
<dbReference type="KEGG" id="cal:CAALFM_C106460CA"/>
<dbReference type="VEuPathDB" id="FungiDB:C1_03620C_A"/>
<dbReference type="VEuPathDB" id="FungiDB:C1_06460C_A"/>
<dbReference type="InParanoid" id="P0CU35"/>
<dbReference type="OMA" id="LPAKNFG"/>
<dbReference type="OrthoDB" id="10250260at2759"/>
<dbReference type="Proteomes" id="UP000000559">
    <property type="component" value="Chromosome 1"/>
</dbReference>
<dbReference type="GO" id="GO:0022627">
    <property type="term" value="C:cytosolic small ribosomal subunit"/>
    <property type="evidence" value="ECO:0000318"/>
    <property type="project" value="GO_Central"/>
</dbReference>
<dbReference type="GO" id="GO:0003735">
    <property type="term" value="F:structural constituent of ribosome"/>
    <property type="evidence" value="ECO:0000318"/>
    <property type="project" value="GO_Central"/>
</dbReference>
<dbReference type="GO" id="GO:0006412">
    <property type="term" value="P:translation"/>
    <property type="evidence" value="ECO:0007669"/>
    <property type="project" value="InterPro"/>
</dbReference>
<dbReference type="FunFam" id="3.30.1370.30:FF:000001">
    <property type="entry name" value="40S ribosomal protein S15a"/>
    <property type="match status" value="1"/>
</dbReference>
<dbReference type="FunFam" id="3.30.1490.10:FF:000002">
    <property type="entry name" value="40S ribosomal protein S15a"/>
    <property type="match status" value="1"/>
</dbReference>
<dbReference type="Gene3D" id="3.30.1370.30">
    <property type="match status" value="1"/>
</dbReference>
<dbReference type="Gene3D" id="3.30.1490.10">
    <property type="match status" value="1"/>
</dbReference>
<dbReference type="HAMAP" id="MF_01302_A">
    <property type="entry name" value="Ribosomal_uS8_A"/>
    <property type="match status" value="1"/>
</dbReference>
<dbReference type="InterPro" id="IPR000630">
    <property type="entry name" value="Ribosomal_uS8"/>
</dbReference>
<dbReference type="InterPro" id="IPR047863">
    <property type="entry name" value="Ribosomal_uS8_CS"/>
</dbReference>
<dbReference type="InterPro" id="IPR035987">
    <property type="entry name" value="Ribosomal_uS8_sf"/>
</dbReference>
<dbReference type="NCBIfam" id="NF003115">
    <property type="entry name" value="PRK04034.1"/>
    <property type="match status" value="1"/>
</dbReference>
<dbReference type="PANTHER" id="PTHR11758">
    <property type="entry name" value="40S RIBOSOMAL PROTEIN S15A"/>
    <property type="match status" value="1"/>
</dbReference>
<dbReference type="Pfam" id="PF00410">
    <property type="entry name" value="Ribosomal_S8"/>
    <property type="match status" value="1"/>
</dbReference>
<dbReference type="SUPFAM" id="SSF56047">
    <property type="entry name" value="Ribosomal protein S8"/>
    <property type="match status" value="1"/>
</dbReference>
<dbReference type="PROSITE" id="PS00053">
    <property type="entry name" value="RIBOSOMAL_S8"/>
    <property type="match status" value="1"/>
</dbReference>
<proteinExistence type="evidence at protein level"/>
<comment type="function">
    <text evidence="1">Component of the ribosome, a large ribonucleoprotein complex responsible for the synthesis of proteins in the cell. The small ribosomal subunit (SSU) binds messenger RNAs (mRNAs) and translates the encoded message by selecting cognate aminoacyl-transfer RNA (tRNA) molecules. The large subunit (LSU) contains the ribosomal catalytic site termed the peptidyl transferase center (PTC), which catalyzes the formation of peptide bonds, thereby polymerizing the amino acids delivered by tRNAs into a polypeptide chain. The nascent polypeptides leave the ribosome through a tunnel in the LSU and interact with protein factors that function in enzymatic processing, targeting, and the membrane insertion of nascent chains at the exit of the ribosomal tunnel.</text>
</comment>
<comment type="subunit">
    <text evidence="1 2">Component of the small ribosomal subunit (SSU) (By similarity). Mature ribosomes consist of a small (40S) and a large (60S) subunit. The 40S subunit contains about 32 different proteins and 1 molecule of RNA (18S). The 60S subunit contains 45 different proteins and 3 molecules of RNA (25S, 5.8S and 5S) (Probable).</text>
</comment>
<comment type="subcellular location">
    <subcellularLocation>
        <location evidence="1">Cytoplasm</location>
    </subcellularLocation>
</comment>
<comment type="similarity">
    <text evidence="2">Belongs to the universal ribosomal protein uS8 family.</text>
</comment>
<gene>
    <name type="primary">RPS22B</name>
    <name type="ordered locus">CAALFM_C103620CA</name>
    <name type="ORF">orf19.3061.1</name>
</gene>
<reference key="1">
    <citation type="journal article" date="2004" name="Proc. Natl. Acad. Sci. U.S.A.">
        <title>The diploid genome sequence of Candida albicans.</title>
        <authorList>
            <person name="Jones T."/>
            <person name="Federspiel N.A."/>
            <person name="Chibana H."/>
            <person name="Dungan J."/>
            <person name="Kalman S."/>
            <person name="Magee B.B."/>
            <person name="Newport G."/>
            <person name="Thorstenson Y.R."/>
            <person name="Agabian N."/>
            <person name="Magee P.T."/>
            <person name="Davis R.W."/>
            <person name="Scherer S."/>
        </authorList>
    </citation>
    <scope>NUCLEOTIDE SEQUENCE [LARGE SCALE GENOMIC DNA]</scope>
    <source>
        <strain>SC5314 / ATCC MYA-2876</strain>
    </source>
</reference>
<reference key="2">
    <citation type="journal article" date="2007" name="Genome Biol.">
        <title>Assembly of the Candida albicans genome into sixteen supercontigs aligned on the eight chromosomes.</title>
        <authorList>
            <person name="van het Hoog M."/>
            <person name="Rast T.J."/>
            <person name="Martchenko M."/>
            <person name="Grindle S."/>
            <person name="Dignard D."/>
            <person name="Hogues H."/>
            <person name="Cuomo C."/>
            <person name="Berriman M."/>
            <person name="Scherer S."/>
            <person name="Magee B.B."/>
            <person name="Whiteway M."/>
            <person name="Chibana H."/>
            <person name="Nantel A."/>
            <person name="Magee P.T."/>
        </authorList>
    </citation>
    <scope>GENOME REANNOTATION</scope>
    <source>
        <strain>SC5314 / ATCC MYA-2876</strain>
    </source>
</reference>
<reference key="3">
    <citation type="journal article" date="2013" name="Genome Biol.">
        <title>Assembly of a phased diploid Candida albicans genome facilitates allele-specific measurements and provides a simple model for repeat and indel structure.</title>
        <authorList>
            <person name="Muzzey D."/>
            <person name="Schwartz K."/>
            <person name="Weissman J.S."/>
            <person name="Sherlock G."/>
        </authorList>
    </citation>
    <scope>NUCLEOTIDE SEQUENCE [LARGE SCALE GENOMIC DNA]</scope>
    <scope>GENOME REANNOTATION</scope>
    <source>
        <strain>SC5314 / ATCC MYA-2876</strain>
    </source>
</reference>
<evidence type="ECO:0000250" key="1">
    <source>
        <dbReference type="UniProtKB" id="Q3E7Y3"/>
    </source>
</evidence>
<evidence type="ECO:0000305" key="2"/>
<feature type="initiator methionine" description="Removed" evidence="1">
    <location>
        <position position="1"/>
    </location>
</feature>
<feature type="chain" id="PRO_0000439055" description="Small ribosomal subunit protein uS8B">
    <location>
        <begin position="2"/>
        <end position="130"/>
    </location>
</feature>
<organism>
    <name type="scientific">Candida albicans (strain SC5314 / ATCC MYA-2876)</name>
    <name type="common">Yeast</name>
    <dbReference type="NCBI Taxonomy" id="237561"/>
    <lineage>
        <taxon>Eukaryota</taxon>
        <taxon>Fungi</taxon>
        <taxon>Dikarya</taxon>
        <taxon>Ascomycota</taxon>
        <taxon>Saccharomycotina</taxon>
        <taxon>Pichiomycetes</taxon>
        <taxon>Debaryomycetaceae</taxon>
        <taxon>Candida/Lodderomyces clade</taxon>
        <taxon>Candida</taxon>
    </lineage>
</organism>
<name>RS22B_CANAL</name>